<name>CARA_CYACA</name>
<comment type="function">
    <text evidence="1">Small subunit of the glutamine-dependent carbamoyl phosphate synthetase (CPSase). CPSase catalyzes the formation of carbamoyl phosphate from the ammonia moiety of glutamine, carbonate, and phosphate donated by ATP, constituting the first step of 2 biosynthetic pathways, one leading to arginine and/or urea and the other to pyrimidine nucleotides. The small subunit (glutamine amidotransferase) binds and cleaves glutamine to supply the large subunit with the substrate ammonia.</text>
</comment>
<comment type="catalytic activity">
    <reaction evidence="1">
        <text>hydrogencarbonate + L-glutamine + 2 ATP + H2O = carbamoyl phosphate + L-glutamate + 2 ADP + phosphate + 2 H(+)</text>
        <dbReference type="Rhea" id="RHEA:18633"/>
        <dbReference type="ChEBI" id="CHEBI:15377"/>
        <dbReference type="ChEBI" id="CHEBI:15378"/>
        <dbReference type="ChEBI" id="CHEBI:17544"/>
        <dbReference type="ChEBI" id="CHEBI:29985"/>
        <dbReference type="ChEBI" id="CHEBI:30616"/>
        <dbReference type="ChEBI" id="CHEBI:43474"/>
        <dbReference type="ChEBI" id="CHEBI:58228"/>
        <dbReference type="ChEBI" id="CHEBI:58359"/>
        <dbReference type="ChEBI" id="CHEBI:456216"/>
        <dbReference type="EC" id="6.3.5.5"/>
    </reaction>
</comment>
<comment type="catalytic activity">
    <molecule>Carbamoyl phosphate synthase small chain</molecule>
    <reaction evidence="1">
        <text>L-glutamine + H2O = L-glutamate + NH4(+)</text>
        <dbReference type="Rhea" id="RHEA:15889"/>
        <dbReference type="ChEBI" id="CHEBI:15377"/>
        <dbReference type="ChEBI" id="CHEBI:28938"/>
        <dbReference type="ChEBI" id="CHEBI:29985"/>
        <dbReference type="ChEBI" id="CHEBI:58359"/>
    </reaction>
</comment>
<comment type="pathway">
    <text evidence="1">Amino-acid biosynthesis; L-arginine biosynthesis; carbamoyl phosphate from bicarbonate: step 1/1.</text>
</comment>
<comment type="pathway">
    <text evidence="1">Pyrimidine metabolism; UMP biosynthesis via de novo pathway; (S)-dihydroorotate from bicarbonate: step 1/3.</text>
</comment>
<comment type="subunit">
    <text evidence="1">Composed of two chains; the small (or glutamine) chain promotes the hydrolysis of glutamine to ammonia, which is used by the large (or ammonia) chain to synthesize carbamoyl phosphate. Tetramer of heterodimers (alpha,beta)4.</text>
</comment>
<comment type="subcellular location">
    <subcellularLocation>
        <location evidence="1">Plastid</location>
        <location evidence="1">Chloroplast</location>
    </subcellularLocation>
</comment>
<comment type="similarity">
    <text evidence="1">Belongs to the CarA family.</text>
</comment>
<accession>O19886</accession>
<reference key="1">
    <citation type="journal article" date="2000" name="J. Mol. Evol.">
        <title>The structure and gene repertoire of an ancient red algal plastid genome.</title>
        <authorList>
            <person name="Gloeckner G."/>
            <person name="Rosenthal A."/>
            <person name="Valentin K.-U."/>
        </authorList>
    </citation>
    <scope>NUCLEOTIDE SEQUENCE [LARGE SCALE GENOMIC DNA]</scope>
    <source>
        <strain>RK-1</strain>
    </source>
</reference>
<geneLocation type="chloroplast"/>
<protein>
    <recommendedName>
        <fullName evidence="1">Carbamoyl phosphate synthase small chain</fullName>
        <ecNumber evidence="1">6.3.5.5</ecNumber>
    </recommendedName>
    <alternativeName>
        <fullName evidence="1">Carbamoyl phosphate synthetase glutamine chain</fullName>
    </alternativeName>
</protein>
<evidence type="ECO:0000255" key="1">
    <source>
        <dbReference type="HAMAP-Rule" id="MF_01209"/>
    </source>
</evidence>
<organism>
    <name type="scientific">Cyanidium caldarium</name>
    <name type="common">Red alga</name>
    <dbReference type="NCBI Taxonomy" id="2771"/>
    <lineage>
        <taxon>Eukaryota</taxon>
        <taxon>Rhodophyta</taxon>
        <taxon>Bangiophyceae</taxon>
        <taxon>Cyanidiales</taxon>
        <taxon>Cyanidiaceae</taxon>
        <taxon>Cyanidium</taxon>
    </lineage>
</organism>
<proteinExistence type="inferred from homology"/>
<feature type="chain" id="PRO_0000112369" description="Carbamoyl phosphate synthase small chain">
    <location>
        <begin position="1"/>
        <end position="399"/>
    </location>
</feature>
<feature type="domain" description="Glutamine amidotransferase type-1" evidence="1">
    <location>
        <begin position="213"/>
        <end position="399"/>
    </location>
</feature>
<feature type="region of interest" description="CPSase" evidence="1">
    <location>
        <begin position="1"/>
        <end position="209"/>
    </location>
</feature>
<feature type="active site" description="Nucleophile" evidence="1">
    <location>
        <position position="289"/>
    </location>
</feature>
<feature type="active site" evidence="1">
    <location>
        <position position="372"/>
    </location>
</feature>
<feature type="active site" evidence="1">
    <location>
        <position position="374"/>
    </location>
</feature>
<feature type="binding site" evidence="1">
    <location>
        <position position="55"/>
    </location>
    <ligand>
        <name>L-glutamine</name>
        <dbReference type="ChEBI" id="CHEBI:58359"/>
    </ligand>
</feature>
<feature type="binding site" evidence="1">
    <location>
        <position position="261"/>
    </location>
    <ligand>
        <name>L-glutamine</name>
        <dbReference type="ChEBI" id="CHEBI:58359"/>
    </ligand>
</feature>
<feature type="binding site" evidence="1">
    <location>
        <position position="263"/>
    </location>
    <ligand>
        <name>L-glutamine</name>
        <dbReference type="ChEBI" id="CHEBI:58359"/>
    </ligand>
</feature>
<feature type="binding site" evidence="1">
    <location>
        <position position="290"/>
    </location>
    <ligand>
        <name>L-glutamine</name>
        <dbReference type="ChEBI" id="CHEBI:58359"/>
    </ligand>
</feature>
<feature type="binding site" evidence="1">
    <location>
        <position position="293"/>
    </location>
    <ligand>
        <name>L-glutamine</name>
        <dbReference type="ChEBI" id="CHEBI:58359"/>
    </ligand>
</feature>
<feature type="binding site" evidence="1">
    <location>
        <position position="329"/>
    </location>
    <ligand>
        <name>L-glutamine</name>
        <dbReference type="ChEBI" id="CHEBI:58359"/>
    </ligand>
</feature>
<feature type="binding site" evidence="1">
    <location>
        <position position="331"/>
    </location>
    <ligand>
        <name>L-glutamine</name>
        <dbReference type="ChEBI" id="CHEBI:58359"/>
    </ligand>
</feature>
<feature type="binding site" evidence="1">
    <location>
        <position position="332"/>
    </location>
    <ligand>
        <name>L-glutamine</name>
        <dbReference type="ChEBI" id="CHEBI:58359"/>
    </ligand>
</feature>
<sequence length="399" mass="45519">MEKFKLLKLGKPATLLLEDGTVFRGKSFSNPQTVTGEIVFNTGMTGYQEIFTDPSYNEQLVVLTYPEIGNTGTNLDDYESLKIQAKGIILKNLSNAYSNFRAMRSLLSFLKRHKVVEIHDIDTRALVLHIRNNKTMLAVISNETYNLTFKEAKATIKYGKHTLNSNLASRVSTSLDYYQWMQPLNRKLKFGYSIIRSFNSAINKKLHTSKKLRIIVLDLGVKFNILRYLKSFECEVIIVNYKSTYQQVMKFHPDGIVISNGPGDPAKINRVVVRVNKFINKKIPILGICLGHQILARCFEAKTFKLKFGHRGLNHPVGINKRMEITSQNHGFAVNFEFLKSNKFYANHLNLNDGTLAGISSQNFPLISVQYHPEGSPGPHDSNYLFKYWVYIIYKSKSS</sequence>
<gene>
    <name evidence="1" type="primary">carA</name>
</gene>
<dbReference type="EC" id="6.3.5.5" evidence="1"/>
<dbReference type="EMBL" id="AF022186">
    <property type="protein sequence ID" value="AAB82703.1"/>
    <property type="molecule type" value="Genomic_DNA"/>
</dbReference>
<dbReference type="PIR" id="T11954">
    <property type="entry name" value="T11954"/>
</dbReference>
<dbReference type="RefSeq" id="NP_045058.1">
    <property type="nucleotide sequence ID" value="NC_001840.1"/>
</dbReference>
<dbReference type="SMR" id="O19886"/>
<dbReference type="GeneID" id="800256"/>
<dbReference type="UniPathway" id="UPA00068">
    <property type="reaction ID" value="UER00171"/>
</dbReference>
<dbReference type="UniPathway" id="UPA00070">
    <property type="reaction ID" value="UER00115"/>
</dbReference>
<dbReference type="GO" id="GO:0009507">
    <property type="term" value="C:chloroplast"/>
    <property type="evidence" value="ECO:0007669"/>
    <property type="project" value="UniProtKB-SubCell"/>
</dbReference>
<dbReference type="GO" id="GO:0005524">
    <property type="term" value="F:ATP binding"/>
    <property type="evidence" value="ECO:0007669"/>
    <property type="project" value="UniProtKB-UniRule"/>
</dbReference>
<dbReference type="GO" id="GO:0004088">
    <property type="term" value="F:carbamoyl-phosphate synthase (glutamine-hydrolyzing) activity"/>
    <property type="evidence" value="ECO:0007669"/>
    <property type="project" value="UniProtKB-UniRule"/>
</dbReference>
<dbReference type="GO" id="GO:0004359">
    <property type="term" value="F:glutaminase activity"/>
    <property type="evidence" value="ECO:0007669"/>
    <property type="project" value="RHEA"/>
</dbReference>
<dbReference type="GO" id="GO:0006207">
    <property type="term" value="P:'de novo' pyrimidine nucleobase biosynthetic process"/>
    <property type="evidence" value="ECO:0007669"/>
    <property type="project" value="InterPro"/>
</dbReference>
<dbReference type="GO" id="GO:0044205">
    <property type="term" value="P:'de novo' UMP biosynthetic process"/>
    <property type="evidence" value="ECO:0007669"/>
    <property type="project" value="UniProtKB-UniRule"/>
</dbReference>
<dbReference type="GO" id="GO:0006541">
    <property type="term" value="P:glutamine metabolic process"/>
    <property type="evidence" value="ECO:0007669"/>
    <property type="project" value="InterPro"/>
</dbReference>
<dbReference type="GO" id="GO:0006526">
    <property type="term" value="P:L-arginine biosynthetic process"/>
    <property type="evidence" value="ECO:0007669"/>
    <property type="project" value="UniProtKB-UniRule"/>
</dbReference>
<dbReference type="CDD" id="cd01744">
    <property type="entry name" value="GATase1_CPSase"/>
    <property type="match status" value="1"/>
</dbReference>
<dbReference type="FunFam" id="3.50.30.20:FF:000001">
    <property type="entry name" value="Carbamoyl-phosphate synthase small chain"/>
    <property type="match status" value="1"/>
</dbReference>
<dbReference type="Gene3D" id="3.40.50.880">
    <property type="match status" value="1"/>
</dbReference>
<dbReference type="Gene3D" id="3.50.30.20">
    <property type="entry name" value="Carbamoyl-phosphate synthase small subunit, N-terminal domain"/>
    <property type="match status" value="1"/>
</dbReference>
<dbReference type="HAMAP" id="MF_01209">
    <property type="entry name" value="CPSase_S_chain"/>
    <property type="match status" value="1"/>
</dbReference>
<dbReference type="InterPro" id="IPR050472">
    <property type="entry name" value="Anth_synth/Amidotransfase"/>
</dbReference>
<dbReference type="InterPro" id="IPR006274">
    <property type="entry name" value="CarbamoylP_synth_ssu"/>
</dbReference>
<dbReference type="InterPro" id="IPR002474">
    <property type="entry name" value="CarbamoylP_synth_ssu_N"/>
</dbReference>
<dbReference type="InterPro" id="IPR036480">
    <property type="entry name" value="CarbP_synth_ssu_N_sf"/>
</dbReference>
<dbReference type="InterPro" id="IPR029062">
    <property type="entry name" value="Class_I_gatase-like"/>
</dbReference>
<dbReference type="InterPro" id="IPR035686">
    <property type="entry name" value="CPSase_GATase1"/>
</dbReference>
<dbReference type="InterPro" id="IPR017926">
    <property type="entry name" value="GATASE"/>
</dbReference>
<dbReference type="NCBIfam" id="TIGR01368">
    <property type="entry name" value="CPSaseIIsmall"/>
    <property type="match status" value="1"/>
</dbReference>
<dbReference type="NCBIfam" id="NF009475">
    <property type="entry name" value="PRK12838.1"/>
    <property type="match status" value="1"/>
</dbReference>
<dbReference type="PANTHER" id="PTHR43418:SF7">
    <property type="entry name" value="CARBAMOYL-PHOSPHATE SYNTHASE SMALL CHAIN"/>
    <property type="match status" value="1"/>
</dbReference>
<dbReference type="PANTHER" id="PTHR43418">
    <property type="entry name" value="MULTIFUNCTIONAL TRYPTOPHAN BIOSYNTHESIS PROTEIN-RELATED"/>
    <property type="match status" value="1"/>
</dbReference>
<dbReference type="Pfam" id="PF00988">
    <property type="entry name" value="CPSase_sm_chain"/>
    <property type="match status" value="1"/>
</dbReference>
<dbReference type="Pfam" id="PF00117">
    <property type="entry name" value="GATase"/>
    <property type="match status" value="1"/>
</dbReference>
<dbReference type="PRINTS" id="PR00097">
    <property type="entry name" value="ANTSNTHASEII"/>
</dbReference>
<dbReference type="PRINTS" id="PR00099">
    <property type="entry name" value="CPSGATASE"/>
</dbReference>
<dbReference type="PRINTS" id="PR00096">
    <property type="entry name" value="GATASE"/>
</dbReference>
<dbReference type="SMART" id="SM01097">
    <property type="entry name" value="CPSase_sm_chain"/>
    <property type="match status" value="1"/>
</dbReference>
<dbReference type="SUPFAM" id="SSF52021">
    <property type="entry name" value="Carbamoyl phosphate synthetase, small subunit N-terminal domain"/>
    <property type="match status" value="1"/>
</dbReference>
<dbReference type="SUPFAM" id="SSF52317">
    <property type="entry name" value="Class I glutamine amidotransferase-like"/>
    <property type="match status" value="1"/>
</dbReference>
<dbReference type="PROSITE" id="PS51273">
    <property type="entry name" value="GATASE_TYPE_1"/>
    <property type="match status" value="1"/>
</dbReference>
<keyword id="KW-0028">Amino-acid biosynthesis</keyword>
<keyword id="KW-0055">Arginine biosynthesis</keyword>
<keyword id="KW-0067">ATP-binding</keyword>
<keyword id="KW-0150">Chloroplast</keyword>
<keyword id="KW-0315">Glutamine amidotransferase</keyword>
<keyword id="KW-0436">Ligase</keyword>
<keyword id="KW-0547">Nucleotide-binding</keyword>
<keyword id="KW-0934">Plastid</keyword>
<keyword id="KW-0665">Pyrimidine biosynthesis</keyword>